<gene>
    <name type="ordered locus">VC_0702</name>
</gene>
<organism>
    <name type="scientific">Vibrio cholerae serotype O1 (strain ATCC 39315 / El Tor Inaba N16961)</name>
    <dbReference type="NCBI Taxonomy" id="243277"/>
    <lineage>
        <taxon>Bacteria</taxon>
        <taxon>Pseudomonadati</taxon>
        <taxon>Pseudomonadota</taxon>
        <taxon>Gammaproteobacteria</taxon>
        <taxon>Vibrionales</taxon>
        <taxon>Vibrionaceae</taxon>
        <taxon>Vibrio</taxon>
    </lineage>
</organism>
<evidence type="ECO:0000255" key="1">
    <source>
        <dbReference type="HAMAP-Rule" id="MF_00648"/>
    </source>
</evidence>
<evidence type="ECO:0000305" key="2"/>
<evidence type="ECO:0007829" key="3">
    <source>
        <dbReference type="PDB" id="1ZWY"/>
    </source>
</evidence>
<name>NCPP_VIBCH</name>
<accession>Q9KU27</accession>
<comment type="function">
    <text evidence="1">Phosphatase that hydrolyzes non-canonical purine nucleotides such as XTP and ITP to their respective diphosphate derivatives. Probably excludes non-canonical purines from DNA/RNA precursor pool, thus preventing their incorporation into DNA/RNA and avoiding chromosomal lesions.</text>
</comment>
<comment type="catalytic activity">
    <reaction evidence="1">
        <text>XTP + H2O = XDP + phosphate + H(+)</text>
        <dbReference type="Rhea" id="RHEA:28406"/>
        <dbReference type="ChEBI" id="CHEBI:15377"/>
        <dbReference type="ChEBI" id="CHEBI:15378"/>
        <dbReference type="ChEBI" id="CHEBI:43474"/>
        <dbReference type="ChEBI" id="CHEBI:59884"/>
        <dbReference type="ChEBI" id="CHEBI:61314"/>
        <dbReference type="EC" id="3.6.1.73"/>
    </reaction>
</comment>
<comment type="catalytic activity">
    <reaction evidence="1">
        <text>ITP + H2O = IDP + phosphate + H(+)</text>
        <dbReference type="Rhea" id="RHEA:28330"/>
        <dbReference type="ChEBI" id="CHEBI:15377"/>
        <dbReference type="ChEBI" id="CHEBI:15378"/>
        <dbReference type="ChEBI" id="CHEBI:43474"/>
        <dbReference type="ChEBI" id="CHEBI:58280"/>
        <dbReference type="ChEBI" id="CHEBI:61402"/>
        <dbReference type="EC" id="3.6.1.73"/>
    </reaction>
</comment>
<comment type="cofactor">
    <cofactor evidence="1">
        <name>Mg(2+)</name>
        <dbReference type="ChEBI" id="CHEBI:18420"/>
    </cofactor>
    <cofactor evidence="1">
        <name>Mn(2+)</name>
        <dbReference type="ChEBI" id="CHEBI:29035"/>
    </cofactor>
    <text evidence="1">Binds 1 divalent metal cation per subunit; can use either Mg(2+) or Mn(2+).</text>
</comment>
<comment type="subunit">
    <text evidence="1">Homodimer.</text>
</comment>
<comment type="similarity">
    <text evidence="1 2">Belongs to the YjjX NTPase family.</text>
</comment>
<sequence>MPPIIKRRVMRKIIIASQNPAKVNAVRSAFSTVFPDQEWEFIGVSVPSEVADQPMSDEETKQGALNRVRNAKQRHPGAEYYVGLEAGIEENKTFAWMIVESDQQRGESRSACLMLPPLVLERLRQAKELGDVMDEVFGTENIKQKGGAIGLLTRHHLTRSTVYHQALILALIPFINPEHYPSA</sequence>
<proteinExistence type="evidence at protein level"/>
<keyword id="KW-0002">3D-structure</keyword>
<keyword id="KW-0378">Hydrolase</keyword>
<keyword id="KW-0460">Magnesium</keyword>
<keyword id="KW-0464">Manganese</keyword>
<keyword id="KW-0479">Metal-binding</keyword>
<keyword id="KW-0546">Nucleotide metabolism</keyword>
<keyword id="KW-0547">Nucleotide-binding</keyword>
<keyword id="KW-1185">Reference proteome</keyword>
<reference key="1">
    <citation type="journal article" date="2000" name="Nature">
        <title>DNA sequence of both chromosomes of the cholera pathogen Vibrio cholerae.</title>
        <authorList>
            <person name="Heidelberg J.F."/>
            <person name="Eisen J.A."/>
            <person name="Nelson W.C."/>
            <person name="Clayton R.A."/>
            <person name="Gwinn M.L."/>
            <person name="Dodson R.J."/>
            <person name="Haft D.H."/>
            <person name="Hickey E.K."/>
            <person name="Peterson J.D."/>
            <person name="Umayam L.A."/>
            <person name="Gill S.R."/>
            <person name="Nelson K.E."/>
            <person name="Read T.D."/>
            <person name="Tettelin H."/>
            <person name="Richardson D.L."/>
            <person name="Ermolaeva M.D."/>
            <person name="Vamathevan J.J."/>
            <person name="Bass S."/>
            <person name="Qin H."/>
            <person name="Dragoi I."/>
            <person name="Sellers P."/>
            <person name="McDonald L.A."/>
            <person name="Utterback T.R."/>
            <person name="Fleischmann R.D."/>
            <person name="Nierman W.C."/>
            <person name="White O."/>
            <person name="Salzberg S.L."/>
            <person name="Smith H.O."/>
            <person name="Colwell R.R."/>
            <person name="Mekalanos J.J."/>
            <person name="Venter J.C."/>
            <person name="Fraser C.M."/>
        </authorList>
    </citation>
    <scope>NUCLEOTIDE SEQUENCE [LARGE SCALE GENOMIC DNA]</scope>
    <source>
        <strain>ATCC 39315 / El Tor Inaba N16961</strain>
    </source>
</reference>
<reference key="2">
    <citation type="journal article" date="2006" name="Proteins">
        <title>Crystal structure of VC0702 at 2.0 A: conserved hypothetical protein from Vibrio cholerae.</title>
        <authorList>
            <person name="Ni S."/>
            <person name="Forouhar F."/>
            <person name="Bussiere D.E."/>
            <person name="Robinson H."/>
            <person name="Kennedy M.A."/>
        </authorList>
    </citation>
    <scope>X-RAY CRYSTALLOGRAPHY (2.0 ANGSTROMS)</scope>
</reference>
<dbReference type="EC" id="3.6.1.73" evidence="1"/>
<dbReference type="EMBL" id="AE003852">
    <property type="protein sequence ID" value="AAF93867.1"/>
    <property type="molecule type" value="Genomic_DNA"/>
</dbReference>
<dbReference type="PIR" id="H82290">
    <property type="entry name" value="H82290"/>
</dbReference>
<dbReference type="RefSeq" id="NP_230351.1">
    <property type="nucleotide sequence ID" value="NC_002505.1"/>
</dbReference>
<dbReference type="PDB" id="1ZNO">
    <property type="method" value="X-ray"/>
    <property type="resolution" value="2.00 A"/>
    <property type="chains" value="A/B=1-183"/>
</dbReference>
<dbReference type="PDB" id="1ZWY">
    <property type="method" value="X-ray"/>
    <property type="resolution" value="1.90 A"/>
    <property type="chains" value="A/B/C/D=1-183"/>
</dbReference>
<dbReference type="PDBsum" id="1ZNO"/>
<dbReference type="PDBsum" id="1ZWY"/>
<dbReference type="SMR" id="Q9KU27"/>
<dbReference type="STRING" id="243277.VC_0702"/>
<dbReference type="DNASU" id="2615706"/>
<dbReference type="EnsemblBacteria" id="AAF93867">
    <property type="protein sequence ID" value="AAF93867"/>
    <property type="gene ID" value="VC_0702"/>
</dbReference>
<dbReference type="KEGG" id="vch:VC_0702"/>
<dbReference type="PATRIC" id="fig|243277.26.peg.672"/>
<dbReference type="eggNOG" id="COG1986">
    <property type="taxonomic scope" value="Bacteria"/>
</dbReference>
<dbReference type="HOGENOM" id="CLU_087417_1_0_6"/>
<dbReference type="EvolutionaryTrace" id="Q9KU27"/>
<dbReference type="Proteomes" id="UP000000584">
    <property type="component" value="Chromosome 1"/>
</dbReference>
<dbReference type="GO" id="GO:0103023">
    <property type="term" value="F:ITPase activity"/>
    <property type="evidence" value="ECO:0007669"/>
    <property type="project" value="UniProtKB-EC"/>
</dbReference>
<dbReference type="GO" id="GO:0046872">
    <property type="term" value="F:metal ion binding"/>
    <property type="evidence" value="ECO:0007669"/>
    <property type="project" value="UniProtKB-KW"/>
</dbReference>
<dbReference type="GO" id="GO:0000166">
    <property type="term" value="F:nucleotide binding"/>
    <property type="evidence" value="ECO:0007669"/>
    <property type="project" value="UniProtKB-KW"/>
</dbReference>
<dbReference type="GO" id="GO:0017111">
    <property type="term" value="F:ribonucleoside triphosphate phosphatase activity"/>
    <property type="evidence" value="ECO:0000250"/>
    <property type="project" value="UniProtKB"/>
</dbReference>
<dbReference type="GO" id="GO:0009117">
    <property type="term" value="P:nucleotide metabolic process"/>
    <property type="evidence" value="ECO:0007669"/>
    <property type="project" value="UniProtKB-KW"/>
</dbReference>
<dbReference type="GO" id="GO:0006772">
    <property type="term" value="P:thiamine metabolic process"/>
    <property type="evidence" value="ECO:0000318"/>
    <property type="project" value="GO_Central"/>
</dbReference>
<dbReference type="FunFam" id="3.90.950.10:FF:000002">
    <property type="entry name" value="Inosine/xanthosine triphosphatase"/>
    <property type="match status" value="1"/>
</dbReference>
<dbReference type="Gene3D" id="3.90.950.10">
    <property type="match status" value="1"/>
</dbReference>
<dbReference type="HAMAP" id="MF_00648">
    <property type="entry name" value="Non_canon_purine_NTPase_YjjX"/>
    <property type="match status" value="1"/>
</dbReference>
<dbReference type="InterPro" id="IPR029001">
    <property type="entry name" value="ITPase-like_fam"/>
</dbReference>
<dbReference type="InterPro" id="IPR002786">
    <property type="entry name" value="Non_canon_purine_NTPase"/>
</dbReference>
<dbReference type="InterPro" id="IPR026533">
    <property type="entry name" value="NTPase/PRRC1"/>
</dbReference>
<dbReference type="InterPro" id="IPR050299">
    <property type="entry name" value="YjjX_NTPase"/>
</dbReference>
<dbReference type="NCBIfam" id="TIGR00258">
    <property type="entry name" value="inosine/xanthosine triphosphatase"/>
    <property type="match status" value="1"/>
</dbReference>
<dbReference type="NCBIfam" id="NF003459">
    <property type="entry name" value="PRK05074.1"/>
    <property type="match status" value="1"/>
</dbReference>
<dbReference type="PANTHER" id="PTHR34699">
    <property type="match status" value="1"/>
</dbReference>
<dbReference type="PANTHER" id="PTHR34699:SF2">
    <property type="entry name" value="NON-CANONICAL PURINE NTP PHOSPHATASE_PRRC1 DOMAIN-CONTAINING PROTEIN"/>
    <property type="match status" value="1"/>
</dbReference>
<dbReference type="Pfam" id="PF01931">
    <property type="entry name" value="NTPase_I-T"/>
    <property type="match status" value="1"/>
</dbReference>
<dbReference type="SUPFAM" id="SSF52972">
    <property type="entry name" value="ITPase-like"/>
    <property type="match status" value="1"/>
</dbReference>
<feature type="chain" id="PRO_0000156350" description="Inosine/xanthosine triphosphatase">
    <location>
        <begin position="1"/>
        <end position="183"/>
    </location>
</feature>
<feature type="helix" evidence="3">
    <location>
        <begin position="4"/>
        <end position="6"/>
    </location>
</feature>
<feature type="strand" evidence="3">
    <location>
        <begin position="12"/>
        <end position="16"/>
    </location>
</feature>
<feature type="helix" evidence="3">
    <location>
        <begin position="20"/>
        <end position="33"/>
    </location>
</feature>
<feature type="strand" evidence="3">
    <location>
        <begin position="40"/>
        <end position="43"/>
    </location>
</feature>
<feature type="helix" evidence="3">
    <location>
        <begin position="57"/>
        <end position="74"/>
    </location>
</feature>
<feature type="strand" evidence="3">
    <location>
        <begin position="79"/>
        <end position="89"/>
    </location>
</feature>
<feature type="strand" evidence="3">
    <location>
        <begin position="92"/>
        <end position="100"/>
    </location>
</feature>
<feature type="strand" evidence="3">
    <location>
        <begin position="105"/>
        <end position="109"/>
    </location>
</feature>
<feature type="helix" evidence="3">
    <location>
        <begin position="117"/>
        <end position="123"/>
    </location>
</feature>
<feature type="helix" evidence="3">
    <location>
        <begin position="129"/>
        <end position="137"/>
    </location>
</feature>
<feature type="helix" evidence="3">
    <location>
        <begin position="139"/>
        <end position="144"/>
    </location>
</feature>
<feature type="helix" evidence="3">
    <location>
        <begin position="147"/>
        <end position="152"/>
    </location>
</feature>
<feature type="turn" evidence="3">
    <location>
        <begin position="153"/>
        <end position="155"/>
    </location>
</feature>
<feature type="helix" evidence="3">
    <location>
        <begin position="159"/>
        <end position="170"/>
    </location>
</feature>
<feature type="helix" evidence="3">
    <location>
        <begin position="172"/>
        <end position="175"/>
    </location>
</feature>
<feature type="helix" evidence="3">
    <location>
        <begin position="177"/>
        <end position="179"/>
    </location>
</feature>
<protein>
    <recommendedName>
        <fullName evidence="1">Inosine/xanthosine triphosphatase</fullName>
        <shortName evidence="1">ITPase/XTPase</shortName>
        <ecNumber evidence="1">3.6.1.73</ecNumber>
    </recommendedName>
    <alternativeName>
        <fullName evidence="1">Non-canonical purine NTP phosphatase</fullName>
    </alternativeName>
    <alternativeName>
        <fullName evidence="1">Non-standard purine NTP phosphatase</fullName>
    </alternativeName>
    <alternativeName>
        <fullName evidence="1">Nucleoside-triphosphate phosphatase</fullName>
        <shortName evidence="1">NTPase</shortName>
    </alternativeName>
</protein>